<protein>
    <recommendedName>
        <fullName evidence="1">Small ribosomal subunit protein bS21</fullName>
    </recommendedName>
    <alternativeName>
        <fullName evidence="2">30S ribosomal protein S21</fullName>
    </alternativeName>
</protein>
<organism>
    <name type="scientific">Staphylococcus carnosus (strain TM300)</name>
    <dbReference type="NCBI Taxonomy" id="396513"/>
    <lineage>
        <taxon>Bacteria</taxon>
        <taxon>Bacillati</taxon>
        <taxon>Bacillota</taxon>
        <taxon>Bacilli</taxon>
        <taxon>Bacillales</taxon>
        <taxon>Staphylococcaceae</taxon>
        <taxon>Staphylococcus</taxon>
    </lineage>
</organism>
<accession>B9DNM1</accession>
<reference key="1">
    <citation type="journal article" date="2009" name="Appl. Environ. Microbiol.">
        <title>Genome analysis of the meat starter culture bacterium Staphylococcus carnosus TM300.</title>
        <authorList>
            <person name="Rosenstein R."/>
            <person name="Nerz C."/>
            <person name="Biswas L."/>
            <person name="Resch A."/>
            <person name="Raddatz G."/>
            <person name="Schuster S.C."/>
            <person name="Goetz F."/>
        </authorList>
    </citation>
    <scope>NUCLEOTIDE SEQUENCE [LARGE SCALE GENOMIC DNA]</scope>
    <source>
        <strain>TM300</strain>
    </source>
</reference>
<proteinExistence type="inferred from homology"/>
<gene>
    <name evidence="1" type="primary">rpsU</name>
    <name type="ordered locus">Sca_1197</name>
</gene>
<keyword id="KW-1185">Reference proteome</keyword>
<keyword id="KW-0687">Ribonucleoprotein</keyword>
<keyword id="KW-0689">Ribosomal protein</keyword>
<dbReference type="EMBL" id="AM295250">
    <property type="protein sequence ID" value="CAL28104.1"/>
    <property type="molecule type" value="Genomic_DNA"/>
</dbReference>
<dbReference type="RefSeq" id="WP_000048060.1">
    <property type="nucleotide sequence ID" value="NC_012121.1"/>
</dbReference>
<dbReference type="SMR" id="B9DNM1"/>
<dbReference type="GeneID" id="98345946"/>
<dbReference type="KEGG" id="sca:SCA_1197"/>
<dbReference type="eggNOG" id="COG0828">
    <property type="taxonomic scope" value="Bacteria"/>
</dbReference>
<dbReference type="HOGENOM" id="CLU_159258_3_2_9"/>
<dbReference type="OrthoDB" id="9799244at2"/>
<dbReference type="BioCyc" id="SCAR396513:SCA_RS05995-MONOMER"/>
<dbReference type="Proteomes" id="UP000000444">
    <property type="component" value="Chromosome"/>
</dbReference>
<dbReference type="GO" id="GO:1990904">
    <property type="term" value="C:ribonucleoprotein complex"/>
    <property type="evidence" value="ECO:0007669"/>
    <property type="project" value="UniProtKB-KW"/>
</dbReference>
<dbReference type="GO" id="GO:0005840">
    <property type="term" value="C:ribosome"/>
    <property type="evidence" value="ECO:0007669"/>
    <property type="project" value="UniProtKB-KW"/>
</dbReference>
<dbReference type="GO" id="GO:0003735">
    <property type="term" value="F:structural constituent of ribosome"/>
    <property type="evidence" value="ECO:0007669"/>
    <property type="project" value="InterPro"/>
</dbReference>
<dbReference type="GO" id="GO:0006412">
    <property type="term" value="P:translation"/>
    <property type="evidence" value="ECO:0007669"/>
    <property type="project" value="UniProtKB-UniRule"/>
</dbReference>
<dbReference type="Gene3D" id="1.20.5.1150">
    <property type="entry name" value="Ribosomal protein S8"/>
    <property type="match status" value="1"/>
</dbReference>
<dbReference type="HAMAP" id="MF_00358">
    <property type="entry name" value="Ribosomal_bS21"/>
    <property type="match status" value="1"/>
</dbReference>
<dbReference type="InterPro" id="IPR001911">
    <property type="entry name" value="Ribosomal_bS21"/>
</dbReference>
<dbReference type="InterPro" id="IPR018278">
    <property type="entry name" value="Ribosomal_bS21_CS"/>
</dbReference>
<dbReference type="InterPro" id="IPR038380">
    <property type="entry name" value="Ribosomal_bS21_sf"/>
</dbReference>
<dbReference type="NCBIfam" id="TIGR00030">
    <property type="entry name" value="S21p"/>
    <property type="match status" value="1"/>
</dbReference>
<dbReference type="PANTHER" id="PTHR21109">
    <property type="entry name" value="MITOCHONDRIAL 28S RIBOSOMAL PROTEIN S21"/>
    <property type="match status" value="1"/>
</dbReference>
<dbReference type="PANTHER" id="PTHR21109:SF22">
    <property type="entry name" value="SMALL RIBOSOMAL SUBUNIT PROTEIN BS21"/>
    <property type="match status" value="1"/>
</dbReference>
<dbReference type="Pfam" id="PF01165">
    <property type="entry name" value="Ribosomal_S21"/>
    <property type="match status" value="1"/>
</dbReference>
<dbReference type="PRINTS" id="PR00976">
    <property type="entry name" value="RIBOSOMALS21"/>
</dbReference>
<dbReference type="PROSITE" id="PS01181">
    <property type="entry name" value="RIBOSOMAL_S21"/>
    <property type="match status" value="1"/>
</dbReference>
<evidence type="ECO:0000255" key="1">
    <source>
        <dbReference type="HAMAP-Rule" id="MF_00358"/>
    </source>
</evidence>
<evidence type="ECO:0000305" key="2"/>
<comment type="similarity">
    <text evidence="1">Belongs to the bacterial ribosomal protein bS21 family.</text>
</comment>
<sequence length="58" mass="6972">MSKTVVRKNESLEDALRRFKRSVSKSGTIQEVRKREFYEKPSVKRKKKSEAARKRKFK</sequence>
<feature type="chain" id="PRO_1000133488" description="Small ribosomal subunit protein bS21">
    <location>
        <begin position="1"/>
        <end position="58"/>
    </location>
</feature>
<name>RS21_STACT</name>